<feature type="chain" id="PRO_0000175829" description="Probable transcriptional regulatory protein lpg1286">
    <location>
        <begin position="1"/>
        <end position="247"/>
    </location>
</feature>
<dbReference type="EMBL" id="AE017354">
    <property type="protein sequence ID" value="AAU27369.1"/>
    <property type="molecule type" value="Genomic_DNA"/>
</dbReference>
<dbReference type="RefSeq" id="WP_010947017.1">
    <property type="nucleotide sequence ID" value="NC_002942.5"/>
</dbReference>
<dbReference type="RefSeq" id="YP_095316.1">
    <property type="nucleotide sequence ID" value="NC_002942.5"/>
</dbReference>
<dbReference type="SMR" id="Q5ZW02"/>
<dbReference type="STRING" id="272624.lpg1286"/>
<dbReference type="PaxDb" id="272624-lpg1286"/>
<dbReference type="KEGG" id="lpn:lpg1286"/>
<dbReference type="PATRIC" id="fig|272624.6.peg.1354"/>
<dbReference type="eggNOG" id="COG0217">
    <property type="taxonomic scope" value="Bacteria"/>
</dbReference>
<dbReference type="HOGENOM" id="CLU_062974_2_2_6"/>
<dbReference type="OrthoDB" id="9781053at2"/>
<dbReference type="Proteomes" id="UP000000609">
    <property type="component" value="Chromosome"/>
</dbReference>
<dbReference type="GO" id="GO:0005829">
    <property type="term" value="C:cytosol"/>
    <property type="evidence" value="ECO:0007669"/>
    <property type="project" value="TreeGrafter"/>
</dbReference>
<dbReference type="GO" id="GO:0003677">
    <property type="term" value="F:DNA binding"/>
    <property type="evidence" value="ECO:0007669"/>
    <property type="project" value="UniProtKB-UniRule"/>
</dbReference>
<dbReference type="GO" id="GO:0006355">
    <property type="term" value="P:regulation of DNA-templated transcription"/>
    <property type="evidence" value="ECO:0007669"/>
    <property type="project" value="UniProtKB-UniRule"/>
</dbReference>
<dbReference type="FunFam" id="1.10.10.200:FF:000002">
    <property type="entry name" value="Probable transcriptional regulatory protein CLM62_37755"/>
    <property type="match status" value="1"/>
</dbReference>
<dbReference type="Gene3D" id="1.10.10.200">
    <property type="match status" value="1"/>
</dbReference>
<dbReference type="Gene3D" id="3.30.70.980">
    <property type="match status" value="2"/>
</dbReference>
<dbReference type="HAMAP" id="MF_00693">
    <property type="entry name" value="Transcrip_reg_TACO1"/>
    <property type="match status" value="1"/>
</dbReference>
<dbReference type="InterPro" id="IPR017856">
    <property type="entry name" value="Integrase-like_N"/>
</dbReference>
<dbReference type="InterPro" id="IPR048300">
    <property type="entry name" value="TACO1_YebC-like_2nd/3rd_dom"/>
</dbReference>
<dbReference type="InterPro" id="IPR049083">
    <property type="entry name" value="TACO1_YebC_N"/>
</dbReference>
<dbReference type="InterPro" id="IPR002876">
    <property type="entry name" value="Transcrip_reg_TACO1-like"/>
</dbReference>
<dbReference type="InterPro" id="IPR026564">
    <property type="entry name" value="Transcrip_reg_TACO1-like_dom3"/>
</dbReference>
<dbReference type="InterPro" id="IPR029072">
    <property type="entry name" value="YebC-like"/>
</dbReference>
<dbReference type="NCBIfam" id="NF001030">
    <property type="entry name" value="PRK00110.1"/>
    <property type="match status" value="1"/>
</dbReference>
<dbReference type="NCBIfam" id="NF009044">
    <property type="entry name" value="PRK12378.1"/>
    <property type="match status" value="1"/>
</dbReference>
<dbReference type="NCBIfam" id="TIGR01033">
    <property type="entry name" value="YebC/PmpR family DNA-binding transcriptional regulator"/>
    <property type="match status" value="1"/>
</dbReference>
<dbReference type="PANTHER" id="PTHR12532:SF6">
    <property type="entry name" value="TRANSCRIPTIONAL REGULATORY PROTEIN YEBC-RELATED"/>
    <property type="match status" value="1"/>
</dbReference>
<dbReference type="PANTHER" id="PTHR12532">
    <property type="entry name" value="TRANSLATIONAL ACTIVATOR OF CYTOCHROME C OXIDASE 1"/>
    <property type="match status" value="1"/>
</dbReference>
<dbReference type="Pfam" id="PF20772">
    <property type="entry name" value="TACO1_YebC_N"/>
    <property type="match status" value="1"/>
</dbReference>
<dbReference type="Pfam" id="PF01709">
    <property type="entry name" value="Transcrip_reg"/>
    <property type="match status" value="1"/>
</dbReference>
<dbReference type="SUPFAM" id="SSF75625">
    <property type="entry name" value="YebC-like"/>
    <property type="match status" value="1"/>
</dbReference>
<reference key="1">
    <citation type="journal article" date="2004" name="Science">
        <title>The genomic sequence of the accidental pathogen Legionella pneumophila.</title>
        <authorList>
            <person name="Chien M."/>
            <person name="Morozova I."/>
            <person name="Shi S."/>
            <person name="Sheng H."/>
            <person name="Chen J."/>
            <person name="Gomez S.M."/>
            <person name="Asamani G."/>
            <person name="Hill K."/>
            <person name="Nuara J."/>
            <person name="Feder M."/>
            <person name="Rineer J."/>
            <person name="Greenberg J.J."/>
            <person name="Steshenko V."/>
            <person name="Park S.H."/>
            <person name="Zhao B."/>
            <person name="Teplitskaya E."/>
            <person name="Edwards J.R."/>
            <person name="Pampou S."/>
            <person name="Georghiou A."/>
            <person name="Chou I.-C."/>
            <person name="Iannuccilli W."/>
            <person name="Ulz M.E."/>
            <person name="Kim D.H."/>
            <person name="Geringer-Sameth A."/>
            <person name="Goldsberry C."/>
            <person name="Morozov P."/>
            <person name="Fischer S.G."/>
            <person name="Segal G."/>
            <person name="Qu X."/>
            <person name="Rzhetsky A."/>
            <person name="Zhang P."/>
            <person name="Cayanis E."/>
            <person name="De Jong P.J."/>
            <person name="Ju J."/>
            <person name="Kalachikov S."/>
            <person name="Shuman H.A."/>
            <person name="Russo J.J."/>
        </authorList>
    </citation>
    <scope>NUCLEOTIDE SEQUENCE [LARGE SCALE GENOMIC DNA]</scope>
    <source>
        <strain>Philadelphia 1 / ATCC 33152 / DSM 7513</strain>
    </source>
</reference>
<comment type="subcellular location">
    <subcellularLocation>
        <location evidence="1">Cytoplasm</location>
    </subcellularLocation>
</comment>
<comment type="similarity">
    <text evidence="1">Belongs to the TACO1 family.</text>
</comment>
<protein>
    <recommendedName>
        <fullName evidence="1">Probable transcriptional regulatory protein lpg1286</fullName>
    </recommendedName>
</protein>
<proteinExistence type="inferred from homology"/>
<name>Y1286_LEGPH</name>
<keyword id="KW-0963">Cytoplasm</keyword>
<keyword id="KW-0238">DNA-binding</keyword>
<keyword id="KW-1185">Reference proteome</keyword>
<keyword id="KW-0804">Transcription</keyword>
<keyword id="KW-0805">Transcription regulation</keyword>
<sequence>MAGHSKWANIKFRKGVQDAKRGKIFTKLIREITVAARMGGGDESSNPRLRDAVKKALNANMKRDTIDNAVKRGVGGVDGEAMIAMRYEGYGPGGVAILVDCLSDNKNRTVSEVRHAFSKHGGNLGTDGSVSYLFTNQGEILMASNQPEDKVMEIAIDAGASDVAVEDGQIEIITPVEAYHTVLNALQDAGLEVEQSHLTMRAQTLVPINDETAESLIKLIDMLEDLDDVQEVYSNAEFSEKILESMN</sequence>
<gene>
    <name type="ordered locus">lpg1286</name>
</gene>
<organism>
    <name type="scientific">Legionella pneumophila subsp. pneumophila (strain Philadelphia 1 / ATCC 33152 / DSM 7513)</name>
    <dbReference type="NCBI Taxonomy" id="272624"/>
    <lineage>
        <taxon>Bacteria</taxon>
        <taxon>Pseudomonadati</taxon>
        <taxon>Pseudomonadota</taxon>
        <taxon>Gammaproteobacteria</taxon>
        <taxon>Legionellales</taxon>
        <taxon>Legionellaceae</taxon>
        <taxon>Legionella</taxon>
    </lineage>
</organism>
<evidence type="ECO:0000255" key="1">
    <source>
        <dbReference type="HAMAP-Rule" id="MF_00693"/>
    </source>
</evidence>
<accession>Q5ZW02</accession>